<organism>
    <name type="scientific">Homo sapiens</name>
    <name type="common">Human</name>
    <dbReference type="NCBI Taxonomy" id="9606"/>
    <lineage>
        <taxon>Eukaryota</taxon>
        <taxon>Metazoa</taxon>
        <taxon>Chordata</taxon>
        <taxon>Craniata</taxon>
        <taxon>Vertebrata</taxon>
        <taxon>Euteleostomi</taxon>
        <taxon>Mammalia</taxon>
        <taxon>Eutheria</taxon>
        <taxon>Euarchontoglires</taxon>
        <taxon>Primates</taxon>
        <taxon>Haplorrhini</taxon>
        <taxon>Catarrhini</taxon>
        <taxon>Hominidae</taxon>
        <taxon>Homo</taxon>
    </lineage>
</organism>
<feature type="chain" id="PRO_0000341970" description="GTPase IMAP family member 8">
    <location>
        <begin position="1"/>
        <end position="665"/>
    </location>
</feature>
<feature type="domain" description="AIG1-type G 1" evidence="5">
    <location>
        <begin position="8"/>
        <end position="210"/>
    </location>
</feature>
<feature type="domain" description="AIG1-type G 2" evidence="5">
    <location>
        <begin position="245"/>
        <end position="435"/>
    </location>
</feature>
<feature type="domain" description="AIG1-type G 3" evidence="5">
    <location>
        <begin position="436"/>
        <end position="644"/>
    </location>
</feature>
<feature type="region of interest" description="G1" evidence="5">
    <location>
        <begin position="17"/>
        <end position="24"/>
    </location>
</feature>
<feature type="region of interest" description="G2" evidence="5">
    <location>
        <begin position="44"/>
        <end position="48"/>
    </location>
</feature>
<feature type="region of interest" description="G3" evidence="5">
    <location>
        <begin position="65"/>
        <end position="68"/>
    </location>
</feature>
<feature type="region of interest" description="G4" evidence="5">
    <location>
        <begin position="134"/>
        <end position="137"/>
    </location>
</feature>
<feature type="region of interest" description="G5" evidence="5">
    <location>
        <begin position="169"/>
        <end position="171"/>
    </location>
</feature>
<feature type="region of interest" description="Disordered" evidence="6">
    <location>
        <begin position="217"/>
        <end position="246"/>
    </location>
</feature>
<feature type="coiled-coil region" evidence="4">
    <location>
        <begin position="400"/>
        <end position="427"/>
    </location>
</feature>
<feature type="coiled-coil region" evidence="4">
    <location>
        <begin position="608"/>
        <end position="657"/>
    </location>
</feature>
<feature type="compositionally biased region" description="Basic and acidic residues" evidence="6">
    <location>
        <begin position="222"/>
        <end position="233"/>
    </location>
</feature>
<feature type="compositionally biased region" description="Polar residues" evidence="6">
    <location>
        <begin position="234"/>
        <end position="246"/>
    </location>
</feature>
<feature type="binding site" evidence="2">
    <location>
        <begin position="17"/>
        <end position="25"/>
    </location>
    <ligand>
        <name>GTP</name>
        <dbReference type="ChEBI" id="CHEBI:37565"/>
    </ligand>
</feature>
<feature type="binding site" evidence="3">
    <location>
        <position position="38"/>
    </location>
    <ligand>
        <name>GTP</name>
        <dbReference type="ChEBI" id="CHEBI:37565"/>
    </ligand>
</feature>
<feature type="binding site" evidence="2">
    <location>
        <begin position="135"/>
        <end position="137"/>
    </location>
    <ligand>
        <name>GTP</name>
        <dbReference type="ChEBI" id="CHEBI:37565"/>
    </ligand>
</feature>
<feature type="binding site" evidence="2">
    <location>
        <position position="170"/>
    </location>
    <ligand>
        <name>GTP</name>
        <dbReference type="ChEBI" id="CHEBI:37565"/>
    </ligand>
</feature>
<feature type="sequence variant" id="VAR_044129" description="In dbSNP:rs2293283.">
    <original>I</original>
    <variation>T</variation>
    <location>
        <position position="301"/>
    </location>
</feature>
<accession>Q8ND71</accession>
<accession>A0A090N8H2</accession>
<keyword id="KW-0175">Coiled coil</keyword>
<keyword id="KW-0963">Cytoplasm</keyword>
<keyword id="KW-0256">Endoplasmic reticulum</keyword>
<keyword id="KW-0333">Golgi apparatus</keyword>
<keyword id="KW-0342">GTP-binding</keyword>
<keyword id="KW-0496">Mitochondrion</keyword>
<keyword id="KW-0547">Nucleotide-binding</keyword>
<keyword id="KW-1267">Proteomics identification</keyword>
<keyword id="KW-1185">Reference proteome</keyword>
<keyword id="KW-0677">Repeat</keyword>
<protein>
    <recommendedName>
        <fullName>GTPase IMAP family member 8</fullName>
    </recommendedName>
    <alternativeName>
        <fullName>Immune-associated nucleotide-binding protein 9</fullName>
        <shortName>IAN-9</shortName>
    </alternativeName>
    <alternativeName>
        <fullName>Protein IanT</fullName>
    </alternativeName>
</protein>
<dbReference type="EMBL" id="AJ633686">
    <property type="protein sequence ID" value="CAG17881.1"/>
    <property type="molecule type" value="mRNA"/>
</dbReference>
<dbReference type="EMBL" id="AL834361">
    <property type="protein sequence ID" value="CAD39025.2"/>
    <property type="molecule type" value="mRNA"/>
</dbReference>
<dbReference type="EMBL" id="AACC02000108">
    <property type="protein sequence ID" value="EAL24479.1"/>
    <property type="molecule type" value="Genomic_DNA"/>
</dbReference>
<dbReference type="EMBL" id="CH471173">
    <property type="protein sequence ID" value="EAW54107.1"/>
    <property type="molecule type" value="Genomic_DNA"/>
</dbReference>
<dbReference type="EMBL" id="BC107037">
    <property type="protein sequence ID" value="AAI07038.1"/>
    <property type="molecule type" value="mRNA"/>
</dbReference>
<dbReference type="CCDS" id="CCDS34777.1"/>
<dbReference type="RefSeq" id="NP_783161.1">
    <property type="nucleotide sequence ID" value="NM_175571.4"/>
</dbReference>
<dbReference type="RefSeq" id="XP_005250007.1">
    <property type="nucleotide sequence ID" value="XM_005249950.5"/>
</dbReference>
<dbReference type="RefSeq" id="XP_054213327.1">
    <property type="nucleotide sequence ID" value="XM_054357352.1"/>
</dbReference>
<dbReference type="SMR" id="Q8ND71"/>
<dbReference type="BioGRID" id="127570">
    <property type="interactions" value="32"/>
</dbReference>
<dbReference type="FunCoup" id="Q8ND71">
    <property type="interactions" value="423"/>
</dbReference>
<dbReference type="IntAct" id="Q8ND71">
    <property type="interactions" value="12"/>
</dbReference>
<dbReference type="STRING" id="9606.ENSP00000305107"/>
<dbReference type="GlyGen" id="Q8ND71">
    <property type="glycosylation" value="1 site, 1 O-linked glycan (1 site)"/>
</dbReference>
<dbReference type="iPTMnet" id="Q8ND71"/>
<dbReference type="PhosphoSitePlus" id="Q8ND71"/>
<dbReference type="BioMuta" id="GIMAP8"/>
<dbReference type="DMDM" id="74751212"/>
<dbReference type="jPOST" id="Q8ND71"/>
<dbReference type="MassIVE" id="Q8ND71"/>
<dbReference type="PaxDb" id="9606-ENSP00000305107"/>
<dbReference type="PeptideAtlas" id="Q8ND71"/>
<dbReference type="ProteomicsDB" id="72983"/>
<dbReference type="Antibodypedia" id="2915">
    <property type="antibodies" value="125 antibodies from 20 providers"/>
</dbReference>
<dbReference type="DNASU" id="155038"/>
<dbReference type="Ensembl" id="ENST00000307271.4">
    <property type="protein sequence ID" value="ENSP00000305107.3"/>
    <property type="gene ID" value="ENSG00000171115.4"/>
</dbReference>
<dbReference type="GeneID" id="155038"/>
<dbReference type="KEGG" id="hsa:155038"/>
<dbReference type="MANE-Select" id="ENST00000307271.4">
    <property type="protein sequence ID" value="ENSP00000305107.3"/>
    <property type="RefSeq nucleotide sequence ID" value="NM_175571.4"/>
    <property type="RefSeq protein sequence ID" value="NP_783161.1"/>
</dbReference>
<dbReference type="UCSC" id="uc003whj.4">
    <property type="organism name" value="human"/>
</dbReference>
<dbReference type="AGR" id="HGNC:21792"/>
<dbReference type="CTD" id="155038"/>
<dbReference type="DisGeNET" id="155038"/>
<dbReference type="GeneCards" id="GIMAP8"/>
<dbReference type="HGNC" id="HGNC:21792">
    <property type="gene designation" value="GIMAP8"/>
</dbReference>
<dbReference type="HPA" id="ENSG00000171115">
    <property type="expression patterns" value="Tissue enhanced (lymphoid)"/>
</dbReference>
<dbReference type="MIM" id="616962">
    <property type="type" value="gene"/>
</dbReference>
<dbReference type="neXtProt" id="NX_Q8ND71"/>
<dbReference type="OpenTargets" id="ENSG00000171115"/>
<dbReference type="PharmGKB" id="PA128394762"/>
<dbReference type="VEuPathDB" id="HostDB:ENSG00000171115"/>
<dbReference type="eggNOG" id="ENOG502RB0C">
    <property type="taxonomic scope" value="Eukaryota"/>
</dbReference>
<dbReference type="GeneTree" id="ENSGT00940000162462"/>
<dbReference type="HOGENOM" id="CLU_010468_5_1_1"/>
<dbReference type="InParanoid" id="Q8ND71"/>
<dbReference type="OMA" id="CIFREKE"/>
<dbReference type="OrthoDB" id="8954335at2759"/>
<dbReference type="PAN-GO" id="Q8ND71">
    <property type="GO annotations" value="1 GO annotation based on evolutionary models"/>
</dbReference>
<dbReference type="PhylomeDB" id="Q8ND71"/>
<dbReference type="TreeFam" id="TF330845"/>
<dbReference type="PathwayCommons" id="Q8ND71"/>
<dbReference type="SignaLink" id="Q8ND71"/>
<dbReference type="BioGRID-ORCS" id="155038">
    <property type="hits" value="8 hits in 1149 CRISPR screens"/>
</dbReference>
<dbReference type="GenomeRNAi" id="155038"/>
<dbReference type="Pharos" id="Q8ND71">
    <property type="development level" value="Tbio"/>
</dbReference>
<dbReference type="PRO" id="PR:Q8ND71"/>
<dbReference type="Proteomes" id="UP000005640">
    <property type="component" value="Chromosome 7"/>
</dbReference>
<dbReference type="RNAct" id="Q8ND71">
    <property type="molecule type" value="protein"/>
</dbReference>
<dbReference type="Bgee" id="ENSG00000171115">
    <property type="expression patterns" value="Expressed in tendon of biceps brachii and 174 other cell types or tissues"/>
</dbReference>
<dbReference type="GO" id="GO:0005829">
    <property type="term" value="C:cytosol"/>
    <property type="evidence" value="ECO:0007669"/>
    <property type="project" value="UniProtKB-SubCell"/>
</dbReference>
<dbReference type="GO" id="GO:0005783">
    <property type="term" value="C:endoplasmic reticulum"/>
    <property type="evidence" value="ECO:0000318"/>
    <property type="project" value="GO_Central"/>
</dbReference>
<dbReference type="GO" id="GO:0005794">
    <property type="term" value="C:Golgi apparatus"/>
    <property type="evidence" value="ECO:0007669"/>
    <property type="project" value="UniProtKB-SubCell"/>
</dbReference>
<dbReference type="GO" id="GO:0005739">
    <property type="term" value="C:mitochondrion"/>
    <property type="evidence" value="ECO:0007669"/>
    <property type="project" value="UniProtKB-SubCell"/>
</dbReference>
<dbReference type="GO" id="GO:0005525">
    <property type="term" value="F:GTP binding"/>
    <property type="evidence" value="ECO:0007669"/>
    <property type="project" value="UniProtKB-KW"/>
</dbReference>
<dbReference type="GO" id="GO:0070232">
    <property type="term" value="P:regulation of T cell apoptotic process"/>
    <property type="evidence" value="ECO:0007669"/>
    <property type="project" value="Ensembl"/>
</dbReference>
<dbReference type="CDD" id="cd01852">
    <property type="entry name" value="AIG1"/>
    <property type="match status" value="3"/>
</dbReference>
<dbReference type="FunFam" id="3.40.50.300:FF:000536">
    <property type="entry name" value="GTPase IMAP family member 8"/>
    <property type="match status" value="3"/>
</dbReference>
<dbReference type="Gene3D" id="3.40.50.300">
    <property type="entry name" value="P-loop containing nucleotide triphosphate hydrolases"/>
    <property type="match status" value="3"/>
</dbReference>
<dbReference type="InterPro" id="IPR006703">
    <property type="entry name" value="G_AIG1"/>
</dbReference>
<dbReference type="InterPro" id="IPR045058">
    <property type="entry name" value="GIMA/IAN/Toc"/>
</dbReference>
<dbReference type="InterPro" id="IPR027417">
    <property type="entry name" value="P-loop_NTPase"/>
</dbReference>
<dbReference type="PANTHER" id="PTHR10903:SF73">
    <property type="entry name" value="GTPASE IMAP FAMILY MEMBER 8"/>
    <property type="match status" value="1"/>
</dbReference>
<dbReference type="PANTHER" id="PTHR10903">
    <property type="entry name" value="GTPASE, IMAP FAMILY MEMBER-RELATED"/>
    <property type="match status" value="1"/>
</dbReference>
<dbReference type="Pfam" id="PF04548">
    <property type="entry name" value="AIG1"/>
    <property type="match status" value="3"/>
</dbReference>
<dbReference type="SUPFAM" id="SSF52540">
    <property type="entry name" value="P-loop containing nucleoside triphosphate hydrolases"/>
    <property type="match status" value="3"/>
</dbReference>
<dbReference type="PROSITE" id="PS51720">
    <property type="entry name" value="G_AIG1"/>
    <property type="match status" value="3"/>
</dbReference>
<sequence length="665" mass="74890">MSEQSCQMSELRLLLLGKCRSGKSATGNAILGKHVFKSKFSDQTVIKMCQRESWVLRERKVVVIDTPDLFSSIACAEDKQRNIQHCLELSAPSLHALLLVIAIGHFTREDEETAKGIQQVFGAEARRHIIIVFTRKDDLGDDLLQDFIEKNKPLKQLVQDYEGRYCIFNNKTNSKDEQITQVLELLRKVESLVNTNGGPYHVNFKTEGSRFQDCVNEAASQEGDKPQGPRERQLQSTGPEQNPGTSELTVLLVGKRGAGKSAAGNSILGRQAFQTGFSEQSVTQSFLSESRSWRKKKVSIIDAPDISSLKNIDSEVRKHICTGPHAFLLVTPLGFYTKNDEAVLSTIQNNFGEKFFEYMIILLTRKEDLGDQDLDTFLRNSNKALYGLIQKCKNRYSAFNYRATGEEEQRQADELLEKIESMVHQNGNKHCVFREKETLNIVLVGRSGTGKSATGNSILGSLVFTSRLRAQPVTKTSQSGRRTWDGQEVVVVDTPSFNQMLDVEKDPSRLEEEVKRCLSCCEKGDTFFVLVFQLGRFTEEDKTAVAKLEAIFGADFTKYAIMLFTRKEDLGAGNLEDFMKNSDNKALRRIFKKCGRRVCAFNNKETGQAQETQVKALLTKVNDLRKESGWSGYPHTQENVSKLIKNVQEMSQAEKLLKNLIGILQ</sequence>
<comment type="function">
    <text evidence="1">Exerts an anti-apoptotic effect in the immune system and is involved in responses to infections.</text>
</comment>
<comment type="subcellular location">
    <subcellularLocation>
        <location evidence="1">Endoplasmic reticulum</location>
    </subcellularLocation>
    <subcellularLocation>
        <location evidence="1">Golgi apparatus</location>
    </subcellularLocation>
    <subcellularLocation>
        <location evidence="1">Mitochondrion</location>
    </subcellularLocation>
    <subcellularLocation>
        <location evidence="8">Cytoplasm</location>
        <location evidence="8">Cytosol</location>
    </subcellularLocation>
</comment>
<comment type="tissue specificity">
    <text evidence="7 8">Expressed in the spleen, intestine, liver, and colon, as well as in lung, placenta, kidney, muscle, and heart. Extremely low expression, if any, in brain, in thymus, bone marrow, and blood leukocytes (PubMed:15474311). Detected in T-cells (PubMed:23454188).</text>
</comment>
<comment type="similarity">
    <text evidence="9">Belongs to the TRAFAC class TrmE-Era-EngA-EngB-Septin-like GTPase superfamily. AIG1/Toc34/Toc159-like paraseptin GTPase family. IAN subfamily.</text>
</comment>
<reference key="1">
    <citation type="journal article" date="2005" name="Int. Immunol.">
        <title>Expression of the Ian family of putative GTPases during T cell development and description of an Ian with three sets of GTP/GDP-binding motifs.</title>
        <authorList>
            <person name="Dion C."/>
            <person name="Carter C."/>
            <person name="Hepburn L."/>
            <person name="Coadwell W.J."/>
            <person name="Morgan G."/>
            <person name="Graham M."/>
            <person name="Pugh N."/>
            <person name="Anderson G."/>
            <person name="Butcher G.W."/>
            <person name="Miller J.R."/>
        </authorList>
    </citation>
    <scope>NUCLEOTIDE SEQUENCE [MRNA]</scope>
    <source>
        <tissue>Spleen</tissue>
    </source>
</reference>
<reference key="2">
    <citation type="journal article" date="2007" name="BMC Genomics">
        <title>The full-ORF clone resource of the German cDNA consortium.</title>
        <authorList>
            <person name="Bechtel S."/>
            <person name="Rosenfelder H."/>
            <person name="Duda A."/>
            <person name="Schmidt C.P."/>
            <person name="Ernst U."/>
            <person name="Wellenreuther R."/>
            <person name="Mehrle A."/>
            <person name="Schuster C."/>
            <person name="Bahr A."/>
            <person name="Bloecker H."/>
            <person name="Heubner D."/>
            <person name="Hoerlein A."/>
            <person name="Michel G."/>
            <person name="Wedler H."/>
            <person name="Koehrer K."/>
            <person name="Ottenwaelder B."/>
            <person name="Poustka A."/>
            <person name="Wiemann S."/>
            <person name="Schupp I."/>
        </authorList>
    </citation>
    <scope>NUCLEOTIDE SEQUENCE [LARGE SCALE MRNA]</scope>
    <source>
        <tissue>Lymph node</tissue>
    </source>
</reference>
<reference key="3">
    <citation type="journal article" date="2003" name="Science">
        <title>Human chromosome 7: DNA sequence and biology.</title>
        <authorList>
            <person name="Scherer S.W."/>
            <person name="Cheung J."/>
            <person name="MacDonald J.R."/>
            <person name="Osborne L.R."/>
            <person name="Nakabayashi K."/>
            <person name="Herbrick J.-A."/>
            <person name="Carson A.R."/>
            <person name="Parker-Katiraee L."/>
            <person name="Skaug J."/>
            <person name="Khaja R."/>
            <person name="Zhang J."/>
            <person name="Hudek A.K."/>
            <person name="Li M."/>
            <person name="Haddad M."/>
            <person name="Duggan G.E."/>
            <person name="Fernandez B.A."/>
            <person name="Kanematsu E."/>
            <person name="Gentles S."/>
            <person name="Christopoulos C.C."/>
            <person name="Choufani S."/>
            <person name="Kwasnicka D."/>
            <person name="Zheng X.H."/>
            <person name="Lai Z."/>
            <person name="Nusskern D.R."/>
            <person name="Zhang Q."/>
            <person name="Gu Z."/>
            <person name="Lu F."/>
            <person name="Zeesman S."/>
            <person name="Nowaczyk M.J."/>
            <person name="Teshima I."/>
            <person name="Chitayat D."/>
            <person name="Shuman C."/>
            <person name="Weksberg R."/>
            <person name="Zackai E.H."/>
            <person name="Grebe T.A."/>
            <person name="Cox S.R."/>
            <person name="Kirkpatrick S.J."/>
            <person name="Rahman N."/>
            <person name="Friedman J.M."/>
            <person name="Heng H.H.Q."/>
            <person name="Pelicci P.G."/>
            <person name="Lo-Coco F."/>
            <person name="Belloni E."/>
            <person name="Shaffer L.G."/>
            <person name="Pober B."/>
            <person name="Morton C.C."/>
            <person name="Gusella J.F."/>
            <person name="Bruns G.A.P."/>
            <person name="Korf B.R."/>
            <person name="Quade B.J."/>
            <person name="Ligon A.H."/>
            <person name="Ferguson H."/>
            <person name="Higgins A.W."/>
            <person name="Leach N.T."/>
            <person name="Herrick S.R."/>
            <person name="Lemyre E."/>
            <person name="Farra C.G."/>
            <person name="Kim H.-G."/>
            <person name="Summers A.M."/>
            <person name="Gripp K.W."/>
            <person name="Roberts W."/>
            <person name="Szatmari P."/>
            <person name="Winsor E.J.T."/>
            <person name="Grzeschik K.-H."/>
            <person name="Teebi A."/>
            <person name="Minassian B.A."/>
            <person name="Kere J."/>
            <person name="Armengol L."/>
            <person name="Pujana M.A."/>
            <person name="Estivill X."/>
            <person name="Wilson M.D."/>
            <person name="Koop B.F."/>
            <person name="Tosi S."/>
            <person name="Moore G.E."/>
            <person name="Boright A.P."/>
            <person name="Zlotorynski E."/>
            <person name="Kerem B."/>
            <person name="Kroisel P.M."/>
            <person name="Petek E."/>
            <person name="Oscier D.G."/>
            <person name="Mould S.J."/>
            <person name="Doehner H."/>
            <person name="Doehner K."/>
            <person name="Rommens J.M."/>
            <person name="Vincent J.B."/>
            <person name="Venter J.C."/>
            <person name="Li P.W."/>
            <person name="Mural R.J."/>
            <person name="Adams M.D."/>
            <person name="Tsui L.-C."/>
        </authorList>
    </citation>
    <scope>NUCLEOTIDE SEQUENCE [LARGE SCALE GENOMIC DNA]</scope>
</reference>
<reference key="4">
    <citation type="submission" date="2005-09" db="EMBL/GenBank/DDBJ databases">
        <authorList>
            <person name="Mural R.J."/>
            <person name="Istrail S."/>
            <person name="Sutton G.G."/>
            <person name="Florea L."/>
            <person name="Halpern A.L."/>
            <person name="Mobarry C.M."/>
            <person name="Lippert R."/>
            <person name="Walenz B."/>
            <person name="Shatkay H."/>
            <person name="Dew I."/>
            <person name="Miller J.R."/>
            <person name="Flanigan M.J."/>
            <person name="Edwards N.J."/>
            <person name="Bolanos R."/>
            <person name="Fasulo D."/>
            <person name="Halldorsson B.V."/>
            <person name="Hannenhalli S."/>
            <person name="Turner R."/>
            <person name="Yooseph S."/>
            <person name="Lu F."/>
            <person name="Nusskern D.R."/>
            <person name="Shue B.C."/>
            <person name="Zheng X.H."/>
            <person name="Zhong F."/>
            <person name="Delcher A.L."/>
            <person name="Huson D.H."/>
            <person name="Kravitz S.A."/>
            <person name="Mouchard L."/>
            <person name="Reinert K."/>
            <person name="Remington K.A."/>
            <person name="Clark A.G."/>
            <person name="Waterman M.S."/>
            <person name="Eichler E.E."/>
            <person name="Adams M.D."/>
            <person name="Hunkapiller M.W."/>
            <person name="Myers E.W."/>
            <person name="Venter J.C."/>
        </authorList>
    </citation>
    <scope>NUCLEOTIDE SEQUENCE [LARGE SCALE GENOMIC DNA]</scope>
</reference>
<reference key="5">
    <citation type="journal article" date="2004" name="Genome Res.">
        <title>The status, quality, and expansion of the NIH full-length cDNA project: the Mammalian Gene Collection (MGC).</title>
        <authorList>
            <consortium name="The MGC Project Team"/>
        </authorList>
    </citation>
    <scope>NUCLEOTIDE SEQUENCE [LARGE SCALE MRNA]</scope>
</reference>
<reference key="6">
    <citation type="journal article" date="2004" name="Gene">
        <title>Comparative analysis of the human gimap gene cluster encoding a novel GTPase family.</title>
        <authorList>
            <person name="Kruecken J."/>
            <person name="Schroetel R.M.U."/>
            <person name="Mueller I.U."/>
            <person name="Saiedani N."/>
            <person name="Marinovski P."/>
            <person name="Benten W.P.M."/>
            <person name="Stamm O."/>
            <person name="Wunderlich F."/>
        </authorList>
    </citation>
    <scope>TISSUE SPECIFICITY</scope>
</reference>
<reference key="7">
    <citation type="journal article" date="2013" name="Structure">
        <title>Structural insights into the mechanism of GTPase activation in the GIMAP family.</title>
        <authorList>
            <person name="Schwefel D."/>
            <person name="Arasu B.S."/>
            <person name="Marino S.F."/>
            <person name="Lamprecht B."/>
            <person name="Kochert K."/>
            <person name="Rosenbaum E."/>
            <person name="Eichhorst J."/>
            <person name="Wiesner B."/>
            <person name="Behlke J."/>
            <person name="Rocks O."/>
            <person name="Mathas S."/>
            <person name="Daumke O."/>
        </authorList>
    </citation>
    <scope>SUBCELLULAR LOCATION</scope>
    <scope>TISSUE SPECIFICITY</scope>
</reference>
<evidence type="ECO:0000250" key="1">
    <source>
        <dbReference type="UniProtKB" id="Q75N62"/>
    </source>
</evidence>
<evidence type="ECO:0000250" key="2">
    <source>
        <dbReference type="UniProtKB" id="Q8WWP7"/>
    </source>
</evidence>
<evidence type="ECO:0000250" key="3">
    <source>
        <dbReference type="UniProtKB" id="Q9UG22"/>
    </source>
</evidence>
<evidence type="ECO:0000255" key="4"/>
<evidence type="ECO:0000255" key="5">
    <source>
        <dbReference type="PROSITE-ProRule" id="PRU01057"/>
    </source>
</evidence>
<evidence type="ECO:0000256" key="6">
    <source>
        <dbReference type="SAM" id="MobiDB-lite"/>
    </source>
</evidence>
<evidence type="ECO:0000269" key="7">
    <source>
    </source>
</evidence>
<evidence type="ECO:0000269" key="8">
    <source>
    </source>
</evidence>
<evidence type="ECO:0000305" key="9"/>
<proteinExistence type="evidence at protein level"/>
<name>GIMA8_HUMAN</name>
<gene>
    <name type="primary">GIMAP8</name>
    <name type="synonym">IAN9</name>
    <name type="synonym">IANT</name>
</gene>